<evidence type="ECO:0000250" key="1"/>
<evidence type="ECO:0000255" key="2">
    <source>
        <dbReference type="PROSITE-ProRule" id="PRU00116"/>
    </source>
</evidence>
<evidence type="ECO:0000256" key="3">
    <source>
        <dbReference type="SAM" id="MobiDB-lite"/>
    </source>
</evidence>
<evidence type="ECO:0000269" key="4">
    <source>
    </source>
</evidence>
<evidence type="ECO:0000269" key="5">
    <source ref="1"/>
</evidence>
<evidence type="ECO:0000305" key="6"/>
<gene>
    <name type="primary">invs-a</name>
    <name type="synonym">inv1</name>
    <name type="synonym">invs-1</name>
</gene>
<name>INVSA_XENLA</name>
<accession>Q71S22</accession>
<accession>Q8UVC0</accession>
<comment type="function">
    <text evidence="1 4">Required for normal renal development and establishment of left-right axis. Probably acts as a molecular switch between different Wnt signaling pathways. Inhibits the canonical Wnt pathway by targeting cytoplasmic disheveled for degradation by the ubiquitin-proteasome. This suggests that it is required in renal development to oppose the repression of terminal differentiation of tubular epithelial cells by Wnt signaling (By similarity). Plays a central role in convergent extension movements in gastrulating embryos, a processus regulated by Wnt signaling.</text>
</comment>
<comment type="subunit">
    <text evidence="1 5">Interacts with apc2 (By similarity). Binds calmodulin.</text>
</comment>
<comment type="subcellular location">
    <subcellularLocation>
        <location evidence="1">Cytoplasm</location>
    </subcellularLocation>
    <subcellularLocation>
        <location evidence="1">Cytoplasm</location>
        <location evidence="1">Cytoskeleton</location>
    </subcellularLocation>
    <text evidence="1">Associates with the cytoskeleton.</text>
</comment>
<comment type="domain">
    <text evidence="1">The D-box (destruction box) mediate the interaction with APC proteins, and may act as a recognition signal for degradation via the ubiquitin-proteasome pathway.</text>
</comment>
<protein>
    <recommendedName>
        <fullName>Inversin-A</fullName>
    </recommendedName>
</protein>
<dbReference type="EMBL" id="AF321228">
    <property type="protein sequence ID" value="AAQ14847.1"/>
    <property type="molecule type" value="mRNA"/>
</dbReference>
<dbReference type="EMBL" id="AF465262">
    <property type="protein sequence ID" value="AAL69978.1"/>
    <property type="molecule type" value="mRNA"/>
</dbReference>
<dbReference type="RefSeq" id="NP_001079230.1">
    <property type="nucleotide sequence ID" value="NM_001085761.1"/>
</dbReference>
<dbReference type="SMR" id="Q71S22"/>
<dbReference type="GeneID" id="378491"/>
<dbReference type="KEGG" id="xla:378491"/>
<dbReference type="AGR" id="Xenbase:XB-GENE-1221139"/>
<dbReference type="CTD" id="378491"/>
<dbReference type="Xenbase" id="XB-GENE-1221139">
    <property type="gene designation" value="invs.S"/>
</dbReference>
<dbReference type="OrthoDB" id="20872at2759"/>
<dbReference type="Proteomes" id="UP000186698">
    <property type="component" value="Chromosome 8S"/>
</dbReference>
<dbReference type="Bgee" id="378491">
    <property type="expression patterns" value="Expressed in blastula and 17 other cell types or tissues"/>
</dbReference>
<dbReference type="GO" id="GO:0005737">
    <property type="term" value="C:cytoplasm"/>
    <property type="evidence" value="ECO:0007669"/>
    <property type="project" value="UniProtKB-SubCell"/>
</dbReference>
<dbReference type="GO" id="GO:0005856">
    <property type="term" value="C:cytoskeleton"/>
    <property type="evidence" value="ECO:0007669"/>
    <property type="project" value="UniProtKB-SubCell"/>
</dbReference>
<dbReference type="GO" id="GO:0005516">
    <property type="term" value="F:calmodulin binding"/>
    <property type="evidence" value="ECO:0007669"/>
    <property type="project" value="UniProtKB-KW"/>
</dbReference>
<dbReference type="GO" id="GO:0016055">
    <property type="term" value="P:Wnt signaling pathway"/>
    <property type="evidence" value="ECO:0007669"/>
    <property type="project" value="UniProtKB-KW"/>
</dbReference>
<dbReference type="CDD" id="cd23767">
    <property type="entry name" value="IQCD"/>
    <property type="match status" value="2"/>
</dbReference>
<dbReference type="Gene3D" id="1.25.40.20">
    <property type="entry name" value="Ankyrin repeat-containing domain"/>
    <property type="match status" value="4"/>
</dbReference>
<dbReference type="InterPro" id="IPR002110">
    <property type="entry name" value="Ankyrin_rpt"/>
</dbReference>
<dbReference type="InterPro" id="IPR036770">
    <property type="entry name" value="Ankyrin_rpt-contain_sf"/>
</dbReference>
<dbReference type="InterPro" id="IPR000048">
    <property type="entry name" value="IQ_motif_EF-hand-BS"/>
</dbReference>
<dbReference type="PANTHER" id="PTHR24161">
    <property type="entry name" value="ANK_REP_REGION DOMAIN-CONTAINING PROTEIN-RELATED"/>
    <property type="match status" value="1"/>
</dbReference>
<dbReference type="PANTHER" id="PTHR24161:SF119">
    <property type="entry name" value="ANKYRIN REPEAT DOMAIN 44"/>
    <property type="match status" value="1"/>
</dbReference>
<dbReference type="Pfam" id="PF00023">
    <property type="entry name" value="Ank"/>
    <property type="match status" value="2"/>
</dbReference>
<dbReference type="Pfam" id="PF12796">
    <property type="entry name" value="Ank_2"/>
    <property type="match status" value="4"/>
</dbReference>
<dbReference type="Pfam" id="PF00612">
    <property type="entry name" value="IQ"/>
    <property type="match status" value="2"/>
</dbReference>
<dbReference type="SMART" id="SM00248">
    <property type="entry name" value="ANK"/>
    <property type="match status" value="16"/>
</dbReference>
<dbReference type="SMART" id="SM00015">
    <property type="entry name" value="IQ"/>
    <property type="match status" value="2"/>
</dbReference>
<dbReference type="SUPFAM" id="SSF48403">
    <property type="entry name" value="Ankyrin repeat"/>
    <property type="match status" value="2"/>
</dbReference>
<dbReference type="PROSITE" id="PS50297">
    <property type="entry name" value="ANK_REP_REGION"/>
    <property type="match status" value="1"/>
</dbReference>
<dbReference type="PROSITE" id="PS50088">
    <property type="entry name" value="ANK_REPEAT"/>
    <property type="match status" value="12"/>
</dbReference>
<dbReference type="PROSITE" id="PS50096">
    <property type="entry name" value="IQ"/>
    <property type="match status" value="2"/>
</dbReference>
<proteinExistence type="evidence at protein level"/>
<keyword id="KW-0040">ANK repeat</keyword>
<keyword id="KW-0112">Calmodulin-binding</keyword>
<keyword id="KW-0963">Cytoplasm</keyword>
<keyword id="KW-0206">Cytoskeleton</keyword>
<keyword id="KW-0217">Developmental protein</keyword>
<keyword id="KW-1185">Reference proteome</keyword>
<keyword id="KW-0677">Repeat</keyword>
<keyword id="KW-0879">Wnt signaling pathway</keyword>
<sequence>MSSPPQGSSLASPVQAAAVTGDKTTLLKLIASSPEVIDQEDQLGRTPLMYSVLGDRRSCAEALLKHGAQVNHPDRSGRTALHLAAQTGNHRLLKLLLSRKADCTHRDLRDITAVHLSTRHQDTRCLALILKYTPPGQVDAQDQRKQTALHWSAYYNRPRHVRLLVRHGSNIGIPDTEGKIPLHWAAGHKDPEAALTVRCLLEAAPTESLLNWQDYEGRTPLHLAVGDGNQEVVRLLTSYRGCNVAPYDNLFRTPLHWAALLGYTPIAHLLLETNNSPNIPSDSQGATPLHYAAQGNCPDTVRVLLSHISVRDEADLEGRTAFMWAAGKGSDEVVRTMLELDPELEVNRTDKYGGTALHAASLSGQITTVRILLENRVQVDAVDVMKHTALFRACEMGHREVISTLIKGGAKVHLVDKDGRSPLHWAALGGNANVCQILIENNINPDAQDYEGRTPLQCAAYGGYIGCMEVLMENKADPNIQDKNGRTALHWSCNNGYLDAVKLLLGYSAFPNQMENTEERYTPLDYALLGGHQEVIQFMLEHGALSIAAIQDIAASKIQAVYKGHKVRRAFQERKNLLMKHEQLRKGAAAKKREGENRQKGKVGQTEGKQKDENHVMRQDKSNEHIQNEVMREWYGEETGRAEDRKEEHQEENQNIEPKQLKHSKHMEQNSKSIAKNQKRAGHIQSSPIEHVHTNSIQTRMSPSRTSISHSSPLGNETPKNMYWDDNPTQNNTQPRRTSRPQIESPNIIVHRIEDLVQKESRRKSHREERKGSHRQRASSHHRLQASERETAGSVIHGEVEFKKKETKKGRRTAAGTSKIRASGEAGRLSQSEKEFSSTGIQGRVDCITSPESCETPSRVCRERKMISAKSGQRPLTETQSPEKACQGSSALKPSLTSHTKQTAIASKCLDSTPSYIGFGEAIKPLTPMGILREGSFSSKWQNIDIELIPLEARLQLVEKEKARKQLFQRKKHAATVIQKAWRTYCIRKSSRKTRHSHLRNNPRAMV</sequence>
<organism>
    <name type="scientific">Xenopus laevis</name>
    <name type="common">African clawed frog</name>
    <dbReference type="NCBI Taxonomy" id="8355"/>
    <lineage>
        <taxon>Eukaryota</taxon>
        <taxon>Metazoa</taxon>
        <taxon>Chordata</taxon>
        <taxon>Craniata</taxon>
        <taxon>Vertebrata</taxon>
        <taxon>Euteleostomi</taxon>
        <taxon>Amphibia</taxon>
        <taxon>Batrachia</taxon>
        <taxon>Anura</taxon>
        <taxon>Pipoidea</taxon>
        <taxon>Pipidae</taxon>
        <taxon>Xenopodinae</taxon>
        <taxon>Xenopus</taxon>
        <taxon>Xenopus</taxon>
    </lineage>
</organism>
<feature type="chain" id="PRO_0000067020" description="Inversin-A">
    <location>
        <begin position="1"/>
        <end position="1007"/>
    </location>
</feature>
<feature type="repeat" description="ANK 1">
    <location>
        <begin position="9"/>
        <end position="39"/>
    </location>
</feature>
<feature type="repeat" description="ANK 2">
    <location>
        <begin position="43"/>
        <end position="72"/>
    </location>
</feature>
<feature type="repeat" description="ANK 3">
    <location>
        <begin position="76"/>
        <end position="105"/>
    </location>
</feature>
<feature type="repeat" description="ANK 4">
    <location>
        <begin position="109"/>
        <end position="140"/>
    </location>
</feature>
<feature type="repeat" description="ANK 5">
    <location>
        <begin position="144"/>
        <end position="173"/>
    </location>
</feature>
<feature type="repeat" description="ANK 6">
    <location>
        <begin position="177"/>
        <end position="209"/>
    </location>
</feature>
<feature type="repeat" description="ANK 7">
    <location>
        <begin position="216"/>
        <end position="246"/>
    </location>
</feature>
<feature type="repeat" description="ANK 8">
    <location>
        <begin position="250"/>
        <end position="279"/>
    </location>
</feature>
<feature type="repeat" description="ANK 9">
    <location>
        <begin position="284"/>
        <end position="313"/>
    </location>
</feature>
<feature type="repeat" description="ANK 10">
    <location>
        <begin position="317"/>
        <end position="346"/>
    </location>
</feature>
<feature type="repeat" description="ANK 11">
    <location>
        <begin position="352"/>
        <end position="381"/>
    </location>
</feature>
<feature type="repeat" description="ANK 12">
    <location>
        <begin position="385"/>
        <end position="414"/>
    </location>
</feature>
<feature type="repeat" description="ANK 13">
    <location>
        <begin position="418"/>
        <end position="447"/>
    </location>
</feature>
<feature type="repeat" description="ANK 14">
    <location>
        <begin position="451"/>
        <end position="480"/>
    </location>
</feature>
<feature type="repeat" description="ANK 15">
    <location>
        <begin position="484"/>
        <end position="513"/>
    </location>
</feature>
<feature type="repeat" description="ANK 16">
    <location>
        <begin position="519"/>
        <end position="549"/>
    </location>
</feature>
<feature type="domain" description="IQ 1" evidence="2">
    <location>
        <begin position="551"/>
        <end position="580"/>
    </location>
</feature>
<feature type="domain" description="IQ 2" evidence="2">
    <location>
        <begin position="971"/>
        <end position="1000"/>
    </location>
</feature>
<feature type="region of interest" description="Disordered" evidence="3">
    <location>
        <begin position="585"/>
        <end position="837"/>
    </location>
</feature>
<feature type="region of interest" description="Disordered" evidence="3">
    <location>
        <begin position="868"/>
        <end position="893"/>
    </location>
</feature>
<feature type="short sequence motif" description="D-box 1">
    <location>
        <begin position="486"/>
        <end position="494"/>
    </location>
</feature>
<feature type="short sequence motif" description="D-box 2">
    <location>
        <begin position="964"/>
        <end position="972"/>
    </location>
</feature>
<feature type="compositionally biased region" description="Basic and acidic residues" evidence="3">
    <location>
        <begin position="585"/>
        <end position="599"/>
    </location>
</feature>
<feature type="compositionally biased region" description="Basic and acidic residues" evidence="3">
    <location>
        <begin position="608"/>
        <end position="652"/>
    </location>
</feature>
<feature type="compositionally biased region" description="Polar residues" evidence="3">
    <location>
        <begin position="684"/>
        <end position="701"/>
    </location>
</feature>
<feature type="compositionally biased region" description="Low complexity" evidence="3">
    <location>
        <begin position="702"/>
        <end position="712"/>
    </location>
</feature>
<feature type="compositionally biased region" description="Polar residues" evidence="3">
    <location>
        <begin position="727"/>
        <end position="745"/>
    </location>
</feature>
<feature type="compositionally biased region" description="Basic and acidic residues" evidence="3">
    <location>
        <begin position="751"/>
        <end position="771"/>
    </location>
</feature>
<feature type="compositionally biased region" description="Basic residues" evidence="3">
    <location>
        <begin position="772"/>
        <end position="784"/>
    </location>
</feature>
<feature type="compositionally biased region" description="Polar residues" evidence="3">
    <location>
        <begin position="870"/>
        <end position="893"/>
    </location>
</feature>
<feature type="sequence conflict" description="In Ref. 2; AAL69978." evidence="6" ref="2">
    <original>I</original>
    <variation>L</variation>
    <location>
        <position position="129"/>
    </location>
</feature>
<reference key="1">
    <citation type="submission" date="2000-11" db="EMBL/GenBank/DDBJ databases">
        <title>The inv RNA randomizes left-right asymmetry in Xenopus embryos through binding to calmodulin.</title>
        <authorList>
            <person name="Yasuhiko Y."/>
            <person name="Shiokawa K."/>
            <person name="Yokoyama T."/>
        </authorList>
    </citation>
    <scope>NUCLEOTIDE SEQUENCE [MRNA]</scope>
    <scope>INTERACTION WITH CALMODULIN</scope>
</reference>
<reference key="2">
    <citation type="journal article" date="2002" name="Hum. Genet.">
        <title>The left-right determinant inversin has highly conserved ankyrin repeat and IQ domains and interacts with calmodulin.</title>
        <authorList>
            <person name="Morgan D."/>
            <person name="Goodship J."/>
            <person name="Essner J.J."/>
            <person name="Vogan K.J."/>
            <person name="Turnpenny L."/>
            <person name="Yost H.J."/>
            <person name="Tabin C.J."/>
            <person name="Strachan T."/>
        </authorList>
    </citation>
    <scope>NUCLEOTIDE SEQUENCE [MRNA] OF 1-653</scope>
</reference>
<reference key="3">
    <citation type="journal article" date="2005" name="Nat. Genet.">
        <title>Inversin, the gene product mutated in nephronophthisis type II, functions as a molecular switch between Wnt signaling pathways.</title>
        <authorList>
            <person name="Simons M."/>
            <person name="Gloy J."/>
            <person name="Ganner A."/>
            <person name="Bullerkotte A."/>
            <person name="Bashkurov M."/>
            <person name="Kroenig C."/>
            <person name="Schermer B."/>
            <person name="Benzing T."/>
            <person name="Cabello O.A."/>
            <person name="Jenny A."/>
            <person name="Mlodzik M."/>
            <person name="Polok B."/>
            <person name="Driever W."/>
            <person name="Obara T."/>
            <person name="Walz G."/>
        </authorList>
    </citation>
    <scope>FUNCTION</scope>
</reference>